<organism>
    <name type="scientific">Methylococcus capsulatus (strain ATCC 33009 / NCIMB 11132 / Bath)</name>
    <dbReference type="NCBI Taxonomy" id="243233"/>
    <lineage>
        <taxon>Bacteria</taxon>
        <taxon>Pseudomonadati</taxon>
        <taxon>Pseudomonadota</taxon>
        <taxon>Gammaproteobacteria</taxon>
        <taxon>Methylococcales</taxon>
        <taxon>Methylococcaceae</taxon>
        <taxon>Methylococcus</taxon>
    </lineage>
</organism>
<reference key="1">
    <citation type="journal article" date="2004" name="PLoS Biol.">
        <title>Genomic insights into methanotrophy: the complete genome sequence of Methylococcus capsulatus (Bath).</title>
        <authorList>
            <person name="Ward N.L."/>
            <person name="Larsen O."/>
            <person name="Sakwa J."/>
            <person name="Bruseth L."/>
            <person name="Khouri H.M."/>
            <person name="Durkin A.S."/>
            <person name="Dimitrov G."/>
            <person name="Jiang L."/>
            <person name="Scanlan D."/>
            <person name="Kang K.H."/>
            <person name="Lewis M.R."/>
            <person name="Nelson K.E."/>
            <person name="Methe B.A."/>
            <person name="Wu M."/>
            <person name="Heidelberg J.F."/>
            <person name="Paulsen I.T."/>
            <person name="Fouts D.E."/>
            <person name="Ravel J."/>
            <person name="Tettelin H."/>
            <person name="Ren Q."/>
            <person name="Read T.D."/>
            <person name="DeBoy R.T."/>
            <person name="Seshadri R."/>
            <person name="Salzberg S.L."/>
            <person name="Jensen H.B."/>
            <person name="Birkeland N.K."/>
            <person name="Nelson W.C."/>
            <person name="Dodson R.J."/>
            <person name="Grindhaug S.H."/>
            <person name="Holt I.E."/>
            <person name="Eidhammer I."/>
            <person name="Jonasen I."/>
            <person name="Vanaken S."/>
            <person name="Utterback T.R."/>
            <person name="Feldblyum T.V."/>
            <person name="Fraser C.M."/>
            <person name="Lillehaug J.R."/>
            <person name="Eisen J.A."/>
        </authorList>
    </citation>
    <scope>NUCLEOTIDE SEQUENCE [LARGE SCALE GENOMIC DNA]</scope>
    <source>
        <strain>ATCC 33009 / NCIMB 11132 / Bath</strain>
    </source>
</reference>
<gene>
    <name type="primary">pqqB</name>
    <name type="ordered locus">MCA1446</name>
</gene>
<sequence>MIIRVLGAGAGGGFPQWNCRCDNCRRFREKNINARGRTQSSIAVSADGQRWVLFNASPDIRSQLEAFPASHPSKGVRDTGIHAIVLIDSQIDHTTGLLMLRESTRPLQVYCSEMVKQDLSTGFPLFRMLEHYCGVEQHTVPLDGSGFTIPGIEGLKFSTHSLKSKAPPYSPHRHDPHEGDNIGVIVENLENGRKLYYAPGLGEIEPHVRAAMEAADCLLVDGTFWREDEMRHAGICDKLAREMGHLPQSGPGGMLEILNTLPNARKVLIHINNTNPILDEDSPQYRTLSEAGVEVAYDGLEIVL</sequence>
<feature type="chain" id="PRO_0000220000" description="Coenzyme PQQ synthesis protein B">
    <location>
        <begin position="1"/>
        <end position="304"/>
    </location>
</feature>
<accession>Q608P3</accession>
<name>PQQB_METCA</name>
<comment type="function">
    <text>May be involved in the transport of PQQ or its precursor to the periplasm, in association with PQQ biosynthesis, but is not absolutely required for this synthesis.</text>
</comment>
<comment type="pathway">
    <text>Cofactor biosynthesis; pyrroloquinoline quinone biosynthesis.</text>
</comment>
<comment type="similarity">
    <text evidence="1">Belongs to the PqqB family.</text>
</comment>
<protein>
    <recommendedName>
        <fullName>Coenzyme PQQ synthesis protein B</fullName>
    </recommendedName>
    <alternativeName>
        <fullName>Pyrroloquinoline quinone biosynthesis protein B</fullName>
    </alternativeName>
</protein>
<evidence type="ECO:0000305" key="1"/>
<dbReference type="EMBL" id="AE017282">
    <property type="protein sequence ID" value="AAU92561.1"/>
    <property type="molecule type" value="Genomic_DNA"/>
</dbReference>
<dbReference type="RefSeq" id="WP_010960723.1">
    <property type="nucleotide sequence ID" value="NC_002977.6"/>
</dbReference>
<dbReference type="SMR" id="Q608P3"/>
<dbReference type="STRING" id="243233.MCA1446"/>
<dbReference type="GeneID" id="88223719"/>
<dbReference type="KEGG" id="mca:MCA1446"/>
<dbReference type="eggNOG" id="COG1235">
    <property type="taxonomic scope" value="Bacteria"/>
</dbReference>
<dbReference type="HOGENOM" id="CLU_061120_0_0_6"/>
<dbReference type="UniPathway" id="UPA00539"/>
<dbReference type="Proteomes" id="UP000006821">
    <property type="component" value="Chromosome"/>
</dbReference>
<dbReference type="GO" id="GO:0018189">
    <property type="term" value="P:pyrroloquinoline quinone biosynthetic process"/>
    <property type="evidence" value="ECO:0007669"/>
    <property type="project" value="UniProtKB-UniRule"/>
</dbReference>
<dbReference type="CDD" id="cd16274">
    <property type="entry name" value="PQQB-like_MBL-fold"/>
    <property type="match status" value="1"/>
</dbReference>
<dbReference type="Gene3D" id="3.60.15.10">
    <property type="entry name" value="Ribonuclease Z/Hydroxyacylglutathione hydrolase-like"/>
    <property type="match status" value="1"/>
</dbReference>
<dbReference type="HAMAP" id="MF_00653">
    <property type="entry name" value="PQQ_syn_PqqB"/>
    <property type="match status" value="1"/>
</dbReference>
<dbReference type="InterPro" id="IPR001279">
    <property type="entry name" value="Metallo-B-lactamas"/>
</dbReference>
<dbReference type="InterPro" id="IPR011842">
    <property type="entry name" value="PQQ_synth_PqqB"/>
</dbReference>
<dbReference type="InterPro" id="IPR036866">
    <property type="entry name" value="RibonucZ/Hydroxyglut_hydro"/>
</dbReference>
<dbReference type="NCBIfam" id="TIGR02108">
    <property type="entry name" value="PQQ_syn_pqqB"/>
    <property type="match status" value="1"/>
</dbReference>
<dbReference type="PANTHER" id="PTHR42663:SF7">
    <property type="entry name" value="COENZYME PQQ SYNTHESIS PROTEIN B"/>
    <property type="match status" value="1"/>
</dbReference>
<dbReference type="PANTHER" id="PTHR42663">
    <property type="entry name" value="HYDROLASE C777.06C-RELATED-RELATED"/>
    <property type="match status" value="1"/>
</dbReference>
<dbReference type="Pfam" id="PF12706">
    <property type="entry name" value="Lactamase_B_2"/>
    <property type="match status" value="1"/>
</dbReference>
<dbReference type="SUPFAM" id="SSF56281">
    <property type="entry name" value="Metallo-hydrolase/oxidoreductase"/>
    <property type="match status" value="1"/>
</dbReference>
<proteinExistence type="inferred from homology"/>
<keyword id="KW-0884">PQQ biosynthesis</keyword>
<keyword id="KW-1185">Reference proteome</keyword>
<keyword id="KW-0813">Transport</keyword>